<organism>
    <name type="scientific">Schizosaccharomyces pombe (strain 972 / ATCC 24843)</name>
    <name type="common">Fission yeast</name>
    <dbReference type="NCBI Taxonomy" id="284812"/>
    <lineage>
        <taxon>Eukaryota</taxon>
        <taxon>Fungi</taxon>
        <taxon>Dikarya</taxon>
        <taxon>Ascomycota</taxon>
        <taxon>Taphrinomycotina</taxon>
        <taxon>Schizosaccharomycetes</taxon>
        <taxon>Schizosaccharomycetales</taxon>
        <taxon>Schizosaccharomycetaceae</taxon>
        <taxon>Schizosaccharomyces</taxon>
    </lineage>
</organism>
<reference key="1">
    <citation type="journal article" date="2002" name="Nature">
        <title>The genome sequence of Schizosaccharomyces pombe.</title>
        <authorList>
            <person name="Wood V."/>
            <person name="Gwilliam R."/>
            <person name="Rajandream M.A."/>
            <person name="Lyne M.H."/>
            <person name="Lyne R."/>
            <person name="Stewart A."/>
            <person name="Sgouros J.G."/>
            <person name="Peat N."/>
            <person name="Hayles J."/>
            <person name="Baker S.G."/>
            <person name="Basham D."/>
            <person name="Bowman S."/>
            <person name="Brooks K."/>
            <person name="Brown D."/>
            <person name="Brown S."/>
            <person name="Chillingworth T."/>
            <person name="Churcher C.M."/>
            <person name="Collins M."/>
            <person name="Connor R."/>
            <person name="Cronin A."/>
            <person name="Davis P."/>
            <person name="Feltwell T."/>
            <person name="Fraser A."/>
            <person name="Gentles S."/>
            <person name="Goble A."/>
            <person name="Hamlin N."/>
            <person name="Harris D.E."/>
            <person name="Hidalgo J."/>
            <person name="Hodgson G."/>
            <person name="Holroyd S."/>
            <person name="Hornsby T."/>
            <person name="Howarth S."/>
            <person name="Huckle E.J."/>
            <person name="Hunt S."/>
            <person name="Jagels K."/>
            <person name="James K.D."/>
            <person name="Jones L."/>
            <person name="Jones M."/>
            <person name="Leather S."/>
            <person name="McDonald S."/>
            <person name="McLean J."/>
            <person name="Mooney P."/>
            <person name="Moule S."/>
            <person name="Mungall K.L."/>
            <person name="Murphy L.D."/>
            <person name="Niblett D."/>
            <person name="Odell C."/>
            <person name="Oliver K."/>
            <person name="O'Neil S."/>
            <person name="Pearson D."/>
            <person name="Quail M.A."/>
            <person name="Rabbinowitsch E."/>
            <person name="Rutherford K.M."/>
            <person name="Rutter S."/>
            <person name="Saunders D."/>
            <person name="Seeger K."/>
            <person name="Sharp S."/>
            <person name="Skelton J."/>
            <person name="Simmonds M.N."/>
            <person name="Squares R."/>
            <person name="Squares S."/>
            <person name="Stevens K."/>
            <person name="Taylor K."/>
            <person name="Taylor R.G."/>
            <person name="Tivey A."/>
            <person name="Walsh S.V."/>
            <person name="Warren T."/>
            <person name="Whitehead S."/>
            <person name="Woodward J.R."/>
            <person name="Volckaert G."/>
            <person name="Aert R."/>
            <person name="Robben J."/>
            <person name="Grymonprez B."/>
            <person name="Weltjens I."/>
            <person name="Vanstreels E."/>
            <person name="Rieger M."/>
            <person name="Schaefer M."/>
            <person name="Mueller-Auer S."/>
            <person name="Gabel C."/>
            <person name="Fuchs M."/>
            <person name="Duesterhoeft A."/>
            <person name="Fritzc C."/>
            <person name="Holzer E."/>
            <person name="Moestl D."/>
            <person name="Hilbert H."/>
            <person name="Borzym K."/>
            <person name="Langer I."/>
            <person name="Beck A."/>
            <person name="Lehrach H."/>
            <person name="Reinhardt R."/>
            <person name="Pohl T.M."/>
            <person name="Eger P."/>
            <person name="Zimmermann W."/>
            <person name="Wedler H."/>
            <person name="Wambutt R."/>
            <person name="Purnelle B."/>
            <person name="Goffeau A."/>
            <person name="Cadieu E."/>
            <person name="Dreano S."/>
            <person name="Gloux S."/>
            <person name="Lelaure V."/>
            <person name="Mottier S."/>
            <person name="Galibert F."/>
            <person name="Aves S.J."/>
            <person name="Xiang Z."/>
            <person name="Hunt C."/>
            <person name="Moore K."/>
            <person name="Hurst S.M."/>
            <person name="Lucas M."/>
            <person name="Rochet M."/>
            <person name="Gaillardin C."/>
            <person name="Tallada V.A."/>
            <person name="Garzon A."/>
            <person name="Thode G."/>
            <person name="Daga R.R."/>
            <person name="Cruzado L."/>
            <person name="Jimenez J."/>
            <person name="Sanchez M."/>
            <person name="del Rey F."/>
            <person name="Benito J."/>
            <person name="Dominguez A."/>
            <person name="Revuelta J.L."/>
            <person name="Moreno S."/>
            <person name="Armstrong J."/>
            <person name="Forsburg S.L."/>
            <person name="Cerutti L."/>
            <person name="Lowe T."/>
            <person name="McCombie W.R."/>
            <person name="Paulsen I."/>
            <person name="Potashkin J."/>
            <person name="Shpakovski G.V."/>
            <person name="Ussery D."/>
            <person name="Barrell B.G."/>
            <person name="Nurse P."/>
        </authorList>
    </citation>
    <scope>NUCLEOTIDE SEQUENCE [LARGE SCALE GENOMIC DNA]</scope>
    <source>
        <strain>972 / ATCC 24843</strain>
    </source>
</reference>
<reference key="2">
    <citation type="journal article" date="2011" name="Science">
        <title>Comparative functional genomics of the fission yeasts.</title>
        <authorList>
            <person name="Rhind N."/>
            <person name="Chen Z."/>
            <person name="Yassour M."/>
            <person name="Thompson D.A."/>
            <person name="Haas B.J."/>
            <person name="Habib N."/>
            <person name="Wapinski I."/>
            <person name="Roy S."/>
            <person name="Lin M.F."/>
            <person name="Heiman D.I."/>
            <person name="Young S.K."/>
            <person name="Furuya K."/>
            <person name="Guo Y."/>
            <person name="Pidoux A."/>
            <person name="Chen H.M."/>
            <person name="Robbertse B."/>
            <person name="Goldberg J.M."/>
            <person name="Aoki K."/>
            <person name="Bayne E.H."/>
            <person name="Berlin A.M."/>
            <person name="Desjardins C.A."/>
            <person name="Dobbs E."/>
            <person name="Dukaj L."/>
            <person name="Fan L."/>
            <person name="FitzGerald M.G."/>
            <person name="French C."/>
            <person name="Gujja S."/>
            <person name="Hansen K."/>
            <person name="Keifenheim D."/>
            <person name="Levin J.Z."/>
            <person name="Mosher R.A."/>
            <person name="Mueller C.A."/>
            <person name="Pfiffner J."/>
            <person name="Priest M."/>
            <person name="Russ C."/>
            <person name="Smialowska A."/>
            <person name="Swoboda P."/>
            <person name="Sykes S.M."/>
            <person name="Vaughn M."/>
            <person name="Vengrova S."/>
            <person name="Yoder R."/>
            <person name="Zeng Q."/>
            <person name="Allshire R."/>
            <person name="Baulcombe D."/>
            <person name="Birren B.W."/>
            <person name="Brown W."/>
            <person name="Ekwall K."/>
            <person name="Kellis M."/>
            <person name="Leatherwood J."/>
            <person name="Levin H."/>
            <person name="Margalit H."/>
            <person name="Martienssen R."/>
            <person name="Nieduszynski C.A."/>
            <person name="Spatafora J.W."/>
            <person name="Friedman N."/>
            <person name="Dalgaard J.Z."/>
            <person name="Baumann P."/>
            <person name="Niki H."/>
            <person name="Regev A."/>
            <person name="Nusbaum C."/>
        </authorList>
    </citation>
    <scope>REVISION OF GENE MODEL</scope>
</reference>
<reference key="3">
    <citation type="journal article" date="2006" name="Nat. Biotechnol.">
        <title>ORFeome cloning and global analysis of protein localization in the fission yeast Schizosaccharomyces pombe.</title>
        <authorList>
            <person name="Matsuyama A."/>
            <person name="Arai R."/>
            <person name="Yashiroda Y."/>
            <person name="Shirai A."/>
            <person name="Kamata A."/>
            <person name="Sekido S."/>
            <person name="Kobayashi Y."/>
            <person name="Hashimoto A."/>
            <person name="Hamamoto M."/>
            <person name="Hiraoka Y."/>
            <person name="Horinouchi S."/>
            <person name="Yoshida M."/>
        </authorList>
    </citation>
    <scope>SUBCELLULAR LOCATION [LARGE SCALE ANALYSIS]</scope>
</reference>
<protein>
    <recommendedName>
        <fullName evidence="3">Large ribosomal subunit protein bL12m</fullName>
    </recommendedName>
    <alternativeName>
        <fullName>54S ribosomal protein L12, mitochondrial</fullName>
    </alternativeName>
    <alternativeName>
        <fullName>Mitochondrial-nucleoid protein 1</fullName>
    </alternativeName>
</protein>
<comment type="function">
    <text evidence="1">Component of the mitochondrial ribosome (mitoribosome), a dedicated translation machinery responsible for the synthesis of mitochondrial genome-encoded proteins, including at least some of the essential transmembrane subunits of the mitochondrial respiratory chain. The mitoribosomes are attached to the mitochondrial inner membrane and translation products are cotranslationally integrated into the membrane.</text>
</comment>
<comment type="subunit">
    <text evidence="1">Component of the mitochondrial large ribosomal subunit (mt-LSU). Mature yeast 74S mitochondrial ribosomes consist of a small (37S) and a large (54S) subunit. The 37S small subunit contains a 15S ribosomal RNA (15S mt-rRNA) and at least 32 different proteins. The 54S large subunit contains a 21S rRNA (21S mt-rRNA) and at least 45 different proteins.</text>
</comment>
<comment type="subcellular location">
    <subcellularLocation>
        <location evidence="2">Mitochondrion</location>
    </subcellularLocation>
</comment>
<comment type="similarity">
    <text evidence="3">Belongs to the bacterial ribosomal protein bL12 family.</text>
</comment>
<dbReference type="EMBL" id="CU329672">
    <property type="protein sequence ID" value="CAB60683.2"/>
    <property type="molecule type" value="Genomic_DNA"/>
</dbReference>
<dbReference type="PIR" id="T50439">
    <property type="entry name" value="T50439"/>
</dbReference>
<dbReference type="RefSeq" id="NP_588081.2">
    <property type="nucleotide sequence ID" value="NM_001023073.2"/>
</dbReference>
<dbReference type="SMR" id="Q9USJ9"/>
<dbReference type="ComplexPortal" id="CPX-10323">
    <property type="entry name" value="54S mitochondrial large ribosomal subunit"/>
</dbReference>
<dbReference type="FunCoup" id="Q9USJ9">
    <property type="interactions" value="289"/>
</dbReference>
<dbReference type="STRING" id="284812.Q9USJ9"/>
<dbReference type="iPTMnet" id="Q9USJ9"/>
<dbReference type="PaxDb" id="4896-SPCC4B3.09c.1"/>
<dbReference type="EnsemblFungi" id="SPCC4B3.09c.1">
    <property type="protein sequence ID" value="SPCC4B3.09c.1:pep"/>
    <property type="gene ID" value="SPCC4B3.09c"/>
</dbReference>
<dbReference type="GeneID" id="2539530"/>
<dbReference type="KEGG" id="spo:2539530"/>
<dbReference type="PomBase" id="SPCC4B3.09c">
    <property type="gene designation" value="mrpl12"/>
</dbReference>
<dbReference type="VEuPathDB" id="FungiDB:SPCC4B3.09c"/>
<dbReference type="eggNOG" id="KOG1715">
    <property type="taxonomic scope" value="Eukaryota"/>
</dbReference>
<dbReference type="HOGENOM" id="CLU_086499_0_2_1"/>
<dbReference type="InParanoid" id="Q9USJ9"/>
<dbReference type="OMA" id="DPTQHRS"/>
<dbReference type="Reactome" id="R-SPO-9837999">
    <property type="pathway name" value="Mitochondrial protein degradation"/>
</dbReference>
<dbReference type="PRO" id="PR:Q9USJ9"/>
<dbReference type="Proteomes" id="UP000002485">
    <property type="component" value="Chromosome III"/>
</dbReference>
<dbReference type="GO" id="GO:0005762">
    <property type="term" value="C:mitochondrial large ribosomal subunit"/>
    <property type="evidence" value="ECO:0000318"/>
    <property type="project" value="GO_Central"/>
</dbReference>
<dbReference type="GO" id="GO:0005739">
    <property type="term" value="C:mitochondrion"/>
    <property type="evidence" value="ECO:0007005"/>
    <property type="project" value="PomBase"/>
</dbReference>
<dbReference type="GO" id="GO:0003729">
    <property type="term" value="F:mRNA binding"/>
    <property type="evidence" value="ECO:0000318"/>
    <property type="project" value="GO_Central"/>
</dbReference>
<dbReference type="GO" id="GO:0003735">
    <property type="term" value="F:structural constituent of ribosome"/>
    <property type="evidence" value="ECO:0000318"/>
    <property type="project" value="GO_Central"/>
</dbReference>
<dbReference type="GO" id="GO:0032543">
    <property type="term" value="P:mitochondrial translation"/>
    <property type="evidence" value="ECO:0000255"/>
    <property type="project" value="PomBase"/>
</dbReference>
<dbReference type="GO" id="GO:0006412">
    <property type="term" value="P:translation"/>
    <property type="evidence" value="ECO:0000318"/>
    <property type="project" value="GO_Central"/>
</dbReference>
<dbReference type="CDD" id="cd00387">
    <property type="entry name" value="Ribosomal_L7_L12"/>
    <property type="match status" value="1"/>
</dbReference>
<dbReference type="FunFam" id="3.30.1390.10:FF:000001">
    <property type="entry name" value="50S ribosomal protein L7/L12"/>
    <property type="match status" value="1"/>
</dbReference>
<dbReference type="Gene3D" id="3.30.1390.10">
    <property type="match status" value="1"/>
</dbReference>
<dbReference type="Gene3D" id="1.20.5.710">
    <property type="entry name" value="Single helix bin"/>
    <property type="match status" value="1"/>
</dbReference>
<dbReference type="HAMAP" id="MF_00368">
    <property type="entry name" value="Ribosomal_bL12"/>
    <property type="match status" value="1"/>
</dbReference>
<dbReference type="InterPro" id="IPR000206">
    <property type="entry name" value="Ribosomal_bL12"/>
</dbReference>
<dbReference type="InterPro" id="IPR013823">
    <property type="entry name" value="Ribosomal_bL12_C"/>
</dbReference>
<dbReference type="InterPro" id="IPR014719">
    <property type="entry name" value="Ribosomal_bL12_C/ClpS-like"/>
</dbReference>
<dbReference type="InterPro" id="IPR008932">
    <property type="entry name" value="Ribosomal_bL12_oligo"/>
</dbReference>
<dbReference type="InterPro" id="IPR036235">
    <property type="entry name" value="Ribosomal_bL12_oligo_N_sf"/>
</dbReference>
<dbReference type="PANTHER" id="PTHR45987">
    <property type="entry name" value="39S RIBOSOMAL PROTEIN L12"/>
    <property type="match status" value="1"/>
</dbReference>
<dbReference type="PANTHER" id="PTHR45987:SF4">
    <property type="entry name" value="LARGE RIBOSOMAL SUBUNIT PROTEIN BL12M"/>
    <property type="match status" value="1"/>
</dbReference>
<dbReference type="Pfam" id="PF00542">
    <property type="entry name" value="Ribosomal_L12"/>
    <property type="match status" value="1"/>
</dbReference>
<dbReference type="Pfam" id="PF16320">
    <property type="entry name" value="Ribosomal_L12_N"/>
    <property type="match status" value="1"/>
</dbReference>
<dbReference type="SUPFAM" id="SSF54736">
    <property type="entry name" value="ClpS-like"/>
    <property type="match status" value="1"/>
</dbReference>
<dbReference type="SUPFAM" id="SSF48300">
    <property type="entry name" value="Ribosomal protein L7/12, oligomerisation (N-terminal) domain"/>
    <property type="match status" value="1"/>
</dbReference>
<sequence>MFRIASRQTRNLRALSSSKNWARSLVNTRSFRAAASVQNNNAQIGEMVDKISSLSLLETSELVKQLKEKLNIAEIAPMAAVAPAVASAAPSEEKAPEEKKEEKTTWNLKLESFDAGSKAKVIKEVKSLLGLSLVDAKKFVESAPKVLKENILKEDAEAIKSKLEKLSCKVVLE</sequence>
<proteinExistence type="inferred from homology"/>
<gene>
    <name type="primary">mrpl12</name>
    <name type="synonym">mnp1</name>
    <name type="ORF">SPCC4B3.09c</name>
</gene>
<keyword id="KW-0496">Mitochondrion</keyword>
<keyword id="KW-1185">Reference proteome</keyword>
<keyword id="KW-0687">Ribonucleoprotein</keyword>
<keyword id="KW-0689">Ribosomal protein</keyword>
<keyword id="KW-0809">Transit peptide</keyword>
<accession>Q9USJ9</accession>
<name>MNP1_SCHPO</name>
<evidence type="ECO:0000250" key="1">
    <source>
        <dbReference type="UniProtKB" id="P53163"/>
    </source>
</evidence>
<evidence type="ECO:0000269" key="2">
    <source>
    </source>
</evidence>
<evidence type="ECO:0000305" key="3"/>
<feature type="transit peptide" description="Mitochondrion">
    <location>
        <begin position="1"/>
        <end position="33"/>
    </location>
</feature>
<feature type="chain" id="PRO_0000311767" description="Large ribosomal subunit protein bL12m">
    <location>
        <begin position="34"/>
        <end position="173"/>
    </location>
</feature>